<reference key="1">
    <citation type="journal article" date="2006" name="Mol. Microbiol.">
        <title>Role of pathogenicity island-associated integrases in the genome plasticity of uropathogenic Escherichia coli strain 536.</title>
        <authorList>
            <person name="Hochhut B."/>
            <person name="Wilde C."/>
            <person name="Balling G."/>
            <person name="Middendorf B."/>
            <person name="Dobrindt U."/>
            <person name="Brzuszkiewicz E."/>
            <person name="Gottschalk G."/>
            <person name="Carniel E."/>
            <person name="Hacker J."/>
        </authorList>
    </citation>
    <scope>NUCLEOTIDE SEQUENCE [LARGE SCALE GENOMIC DNA]</scope>
    <source>
        <strain>536 / UPEC</strain>
    </source>
</reference>
<accession>Q0TBJ8</accession>
<name>GPDA_ECOL5</name>
<evidence type="ECO:0000255" key="1">
    <source>
        <dbReference type="HAMAP-Rule" id="MF_00394"/>
    </source>
</evidence>
<keyword id="KW-0963">Cytoplasm</keyword>
<keyword id="KW-0444">Lipid biosynthesis</keyword>
<keyword id="KW-0443">Lipid metabolism</keyword>
<keyword id="KW-0520">NAD</keyword>
<keyword id="KW-0521">NADP</keyword>
<keyword id="KW-0547">Nucleotide-binding</keyword>
<keyword id="KW-0560">Oxidoreductase</keyword>
<keyword id="KW-0594">Phospholipid biosynthesis</keyword>
<keyword id="KW-1208">Phospholipid metabolism</keyword>
<organism>
    <name type="scientific">Escherichia coli O6:K15:H31 (strain 536 / UPEC)</name>
    <dbReference type="NCBI Taxonomy" id="362663"/>
    <lineage>
        <taxon>Bacteria</taxon>
        <taxon>Pseudomonadati</taxon>
        <taxon>Pseudomonadota</taxon>
        <taxon>Gammaproteobacteria</taxon>
        <taxon>Enterobacterales</taxon>
        <taxon>Enterobacteriaceae</taxon>
        <taxon>Escherichia</taxon>
    </lineage>
</organism>
<dbReference type="EC" id="1.1.1.94" evidence="1"/>
<dbReference type="EMBL" id="CP000247">
    <property type="protein sequence ID" value="ABG71681.1"/>
    <property type="molecule type" value="Genomic_DNA"/>
</dbReference>
<dbReference type="RefSeq" id="WP_001076194.1">
    <property type="nucleotide sequence ID" value="NC_008253.1"/>
</dbReference>
<dbReference type="SMR" id="Q0TBJ8"/>
<dbReference type="GeneID" id="93778322"/>
<dbReference type="KEGG" id="ecp:ECP_3709"/>
<dbReference type="HOGENOM" id="CLU_033449_0_2_6"/>
<dbReference type="UniPathway" id="UPA00940"/>
<dbReference type="Proteomes" id="UP000009182">
    <property type="component" value="Chromosome"/>
</dbReference>
<dbReference type="GO" id="GO:0005829">
    <property type="term" value="C:cytosol"/>
    <property type="evidence" value="ECO:0007669"/>
    <property type="project" value="TreeGrafter"/>
</dbReference>
<dbReference type="GO" id="GO:0047952">
    <property type="term" value="F:glycerol-3-phosphate dehydrogenase [NAD(P)+] activity"/>
    <property type="evidence" value="ECO:0007669"/>
    <property type="project" value="UniProtKB-UniRule"/>
</dbReference>
<dbReference type="GO" id="GO:0051287">
    <property type="term" value="F:NAD binding"/>
    <property type="evidence" value="ECO:0007669"/>
    <property type="project" value="InterPro"/>
</dbReference>
<dbReference type="GO" id="GO:0005975">
    <property type="term" value="P:carbohydrate metabolic process"/>
    <property type="evidence" value="ECO:0007669"/>
    <property type="project" value="InterPro"/>
</dbReference>
<dbReference type="GO" id="GO:0046167">
    <property type="term" value="P:glycerol-3-phosphate biosynthetic process"/>
    <property type="evidence" value="ECO:0007669"/>
    <property type="project" value="UniProtKB-UniRule"/>
</dbReference>
<dbReference type="GO" id="GO:0046168">
    <property type="term" value="P:glycerol-3-phosphate catabolic process"/>
    <property type="evidence" value="ECO:0007669"/>
    <property type="project" value="InterPro"/>
</dbReference>
<dbReference type="GO" id="GO:0046474">
    <property type="term" value="P:glycerophospholipid biosynthetic process"/>
    <property type="evidence" value="ECO:0007669"/>
    <property type="project" value="TreeGrafter"/>
</dbReference>
<dbReference type="FunFam" id="1.10.1040.10:FF:000001">
    <property type="entry name" value="Glycerol-3-phosphate dehydrogenase [NAD(P)+]"/>
    <property type="match status" value="1"/>
</dbReference>
<dbReference type="FunFam" id="3.40.50.720:FF:000019">
    <property type="entry name" value="Glycerol-3-phosphate dehydrogenase [NAD(P)+]"/>
    <property type="match status" value="1"/>
</dbReference>
<dbReference type="Gene3D" id="1.10.1040.10">
    <property type="entry name" value="N-(1-d-carboxylethyl)-l-norvaline Dehydrogenase, domain 2"/>
    <property type="match status" value="1"/>
</dbReference>
<dbReference type="Gene3D" id="3.40.50.720">
    <property type="entry name" value="NAD(P)-binding Rossmann-like Domain"/>
    <property type="match status" value="1"/>
</dbReference>
<dbReference type="HAMAP" id="MF_00394">
    <property type="entry name" value="NAD_Glyc3P_dehydrog"/>
    <property type="match status" value="1"/>
</dbReference>
<dbReference type="InterPro" id="IPR008927">
    <property type="entry name" value="6-PGluconate_DH-like_C_sf"/>
</dbReference>
<dbReference type="InterPro" id="IPR013328">
    <property type="entry name" value="6PGD_dom2"/>
</dbReference>
<dbReference type="InterPro" id="IPR006168">
    <property type="entry name" value="G3P_DH_NAD-dep"/>
</dbReference>
<dbReference type="InterPro" id="IPR006109">
    <property type="entry name" value="G3P_DH_NAD-dep_C"/>
</dbReference>
<dbReference type="InterPro" id="IPR011128">
    <property type="entry name" value="G3P_DH_NAD-dep_N"/>
</dbReference>
<dbReference type="InterPro" id="IPR036291">
    <property type="entry name" value="NAD(P)-bd_dom_sf"/>
</dbReference>
<dbReference type="NCBIfam" id="NF000939">
    <property type="entry name" value="PRK00094.1-1"/>
    <property type="match status" value="1"/>
</dbReference>
<dbReference type="NCBIfam" id="NF000940">
    <property type="entry name" value="PRK00094.1-2"/>
    <property type="match status" value="1"/>
</dbReference>
<dbReference type="NCBIfam" id="NF000942">
    <property type="entry name" value="PRK00094.1-4"/>
    <property type="match status" value="1"/>
</dbReference>
<dbReference type="PANTHER" id="PTHR11728">
    <property type="entry name" value="GLYCEROL-3-PHOSPHATE DEHYDROGENASE"/>
    <property type="match status" value="1"/>
</dbReference>
<dbReference type="PANTHER" id="PTHR11728:SF1">
    <property type="entry name" value="GLYCEROL-3-PHOSPHATE DEHYDROGENASE [NAD(+)] 2, CHLOROPLASTIC"/>
    <property type="match status" value="1"/>
</dbReference>
<dbReference type="Pfam" id="PF07479">
    <property type="entry name" value="NAD_Gly3P_dh_C"/>
    <property type="match status" value="1"/>
</dbReference>
<dbReference type="Pfam" id="PF01210">
    <property type="entry name" value="NAD_Gly3P_dh_N"/>
    <property type="match status" value="1"/>
</dbReference>
<dbReference type="PIRSF" id="PIRSF000114">
    <property type="entry name" value="Glycerol-3-P_dh"/>
    <property type="match status" value="1"/>
</dbReference>
<dbReference type="PRINTS" id="PR00077">
    <property type="entry name" value="GPDHDRGNASE"/>
</dbReference>
<dbReference type="SUPFAM" id="SSF48179">
    <property type="entry name" value="6-phosphogluconate dehydrogenase C-terminal domain-like"/>
    <property type="match status" value="1"/>
</dbReference>
<dbReference type="SUPFAM" id="SSF51735">
    <property type="entry name" value="NAD(P)-binding Rossmann-fold domains"/>
    <property type="match status" value="1"/>
</dbReference>
<dbReference type="PROSITE" id="PS00957">
    <property type="entry name" value="NAD_G3PDH"/>
    <property type="match status" value="1"/>
</dbReference>
<sequence>MNQRNASMTVIGAGSYGTALAITLARNGHEVVLWGHDPEHIATLERDRCNAAFLPDVPFPDTLHLESDLATALAASRNILVVVPSHVFGEVLRQIKPLMRPDARLVWATKGLEAETGRLLQDVAREALGDQIPLAVISGPTFAKELAAGLPTAISLASTDQTFADDLQQLLHCGKSFRVYSNPDFIGVQLGGAVKNVIAIGAGMSDGIGFGANARTALITRGLAEMSRLGAALGADPATFMGMAGLGDLVLTCTDNQSRNRRFGMMLGQGMDVQSAQEKIGQVVEGYRNTKEVRELAHRFGVEMPITEEIYQVLYCGKNAREAALTLLGRARKDERSSH</sequence>
<protein>
    <recommendedName>
        <fullName evidence="1">Glycerol-3-phosphate dehydrogenase [NAD(P)+]</fullName>
        <ecNumber evidence="1">1.1.1.94</ecNumber>
    </recommendedName>
    <alternativeName>
        <fullName evidence="1">NAD(P)(+)-dependent glycerol-3-phosphate dehydrogenase</fullName>
    </alternativeName>
    <alternativeName>
        <fullName evidence="1">NAD(P)H-dependent dihydroxyacetone-phosphate reductase</fullName>
    </alternativeName>
</protein>
<proteinExistence type="inferred from homology"/>
<comment type="function">
    <text evidence="1">Catalyzes the reduction of the glycolytic intermediate dihydroxyacetone phosphate (DHAP) to sn-glycerol 3-phosphate (G3P), the key precursor for phospholipid synthesis.</text>
</comment>
<comment type="catalytic activity">
    <reaction evidence="1">
        <text>sn-glycerol 3-phosphate + NAD(+) = dihydroxyacetone phosphate + NADH + H(+)</text>
        <dbReference type="Rhea" id="RHEA:11092"/>
        <dbReference type="ChEBI" id="CHEBI:15378"/>
        <dbReference type="ChEBI" id="CHEBI:57540"/>
        <dbReference type="ChEBI" id="CHEBI:57597"/>
        <dbReference type="ChEBI" id="CHEBI:57642"/>
        <dbReference type="ChEBI" id="CHEBI:57945"/>
        <dbReference type="EC" id="1.1.1.94"/>
    </reaction>
    <physiologicalReaction direction="right-to-left" evidence="1">
        <dbReference type="Rhea" id="RHEA:11094"/>
    </physiologicalReaction>
</comment>
<comment type="catalytic activity">
    <reaction evidence="1">
        <text>sn-glycerol 3-phosphate + NADP(+) = dihydroxyacetone phosphate + NADPH + H(+)</text>
        <dbReference type="Rhea" id="RHEA:11096"/>
        <dbReference type="ChEBI" id="CHEBI:15378"/>
        <dbReference type="ChEBI" id="CHEBI:57597"/>
        <dbReference type="ChEBI" id="CHEBI:57642"/>
        <dbReference type="ChEBI" id="CHEBI:57783"/>
        <dbReference type="ChEBI" id="CHEBI:58349"/>
        <dbReference type="EC" id="1.1.1.94"/>
    </reaction>
    <physiologicalReaction direction="right-to-left" evidence="1">
        <dbReference type="Rhea" id="RHEA:11098"/>
    </physiologicalReaction>
</comment>
<comment type="pathway">
    <text evidence="1">Membrane lipid metabolism; glycerophospholipid metabolism.</text>
</comment>
<comment type="subcellular location">
    <subcellularLocation>
        <location evidence="1">Cytoplasm</location>
    </subcellularLocation>
</comment>
<comment type="similarity">
    <text evidence="1">Belongs to the NAD-dependent glycerol-3-phosphate dehydrogenase family.</text>
</comment>
<gene>
    <name evidence="1" type="primary">gpsA</name>
    <name type="ordered locus">ECP_3709</name>
</gene>
<feature type="chain" id="PRO_0000255313" description="Glycerol-3-phosphate dehydrogenase [NAD(P)+]">
    <location>
        <begin position="1"/>
        <end position="339"/>
    </location>
</feature>
<feature type="active site" description="Proton acceptor" evidence="1">
    <location>
        <position position="195"/>
    </location>
</feature>
<feature type="binding site" evidence="1">
    <location>
        <position position="15"/>
    </location>
    <ligand>
        <name>NADPH</name>
        <dbReference type="ChEBI" id="CHEBI:57783"/>
    </ligand>
</feature>
<feature type="binding site" evidence="1">
    <location>
        <position position="16"/>
    </location>
    <ligand>
        <name>NADPH</name>
        <dbReference type="ChEBI" id="CHEBI:57783"/>
    </ligand>
</feature>
<feature type="binding site" evidence="1">
    <location>
        <position position="36"/>
    </location>
    <ligand>
        <name>NADPH</name>
        <dbReference type="ChEBI" id="CHEBI:57783"/>
    </ligand>
</feature>
<feature type="binding site" evidence="1">
    <location>
        <position position="110"/>
    </location>
    <ligand>
        <name>NADPH</name>
        <dbReference type="ChEBI" id="CHEBI:57783"/>
    </ligand>
</feature>
<feature type="binding site" evidence="1">
    <location>
        <position position="110"/>
    </location>
    <ligand>
        <name>sn-glycerol 3-phosphate</name>
        <dbReference type="ChEBI" id="CHEBI:57597"/>
    </ligand>
</feature>
<feature type="binding site" evidence="1">
    <location>
        <position position="139"/>
    </location>
    <ligand>
        <name>sn-glycerol 3-phosphate</name>
        <dbReference type="ChEBI" id="CHEBI:57597"/>
    </ligand>
</feature>
<feature type="binding site" evidence="1">
    <location>
        <position position="141"/>
    </location>
    <ligand>
        <name>sn-glycerol 3-phosphate</name>
        <dbReference type="ChEBI" id="CHEBI:57597"/>
    </ligand>
</feature>
<feature type="binding site" evidence="1">
    <location>
        <position position="143"/>
    </location>
    <ligand>
        <name>NADPH</name>
        <dbReference type="ChEBI" id="CHEBI:57783"/>
    </ligand>
</feature>
<feature type="binding site" evidence="1">
    <location>
        <position position="195"/>
    </location>
    <ligand>
        <name>sn-glycerol 3-phosphate</name>
        <dbReference type="ChEBI" id="CHEBI:57597"/>
    </ligand>
</feature>
<feature type="binding site" evidence="1">
    <location>
        <position position="248"/>
    </location>
    <ligand>
        <name>sn-glycerol 3-phosphate</name>
        <dbReference type="ChEBI" id="CHEBI:57597"/>
    </ligand>
</feature>
<feature type="binding site" evidence="1">
    <location>
        <position position="258"/>
    </location>
    <ligand>
        <name>sn-glycerol 3-phosphate</name>
        <dbReference type="ChEBI" id="CHEBI:57597"/>
    </ligand>
</feature>
<feature type="binding site" evidence="1">
    <location>
        <position position="259"/>
    </location>
    <ligand>
        <name>NADPH</name>
        <dbReference type="ChEBI" id="CHEBI:57783"/>
    </ligand>
</feature>
<feature type="binding site" evidence="1">
    <location>
        <position position="259"/>
    </location>
    <ligand>
        <name>sn-glycerol 3-phosphate</name>
        <dbReference type="ChEBI" id="CHEBI:57597"/>
    </ligand>
</feature>
<feature type="binding site" evidence="1">
    <location>
        <position position="260"/>
    </location>
    <ligand>
        <name>sn-glycerol 3-phosphate</name>
        <dbReference type="ChEBI" id="CHEBI:57597"/>
    </ligand>
</feature>
<feature type="binding site" evidence="1">
    <location>
        <position position="283"/>
    </location>
    <ligand>
        <name>NADPH</name>
        <dbReference type="ChEBI" id="CHEBI:57783"/>
    </ligand>
</feature>
<feature type="binding site" evidence="1">
    <location>
        <position position="285"/>
    </location>
    <ligand>
        <name>NADPH</name>
        <dbReference type="ChEBI" id="CHEBI:57783"/>
    </ligand>
</feature>